<proteinExistence type="evidence at protein level"/>
<organism>
    <name type="scientific">Chlorobaculum thiosulfatiphilum</name>
    <name type="common">Chlorobium limicola f.sp. thiosulfatophilum</name>
    <dbReference type="NCBI Taxonomy" id="115852"/>
    <lineage>
        <taxon>Bacteria</taxon>
        <taxon>Pseudomonadati</taxon>
        <taxon>Chlorobiota</taxon>
        <taxon>Chlorobiia</taxon>
        <taxon>Chlorobiales</taxon>
        <taxon>Chlorobiaceae</taxon>
        <taxon>Chlorobaculum</taxon>
    </lineage>
</organism>
<name>SOXA_CHLTI</name>
<protein>
    <recommendedName>
        <fullName evidence="9">L-cysteine S-thiosulfotransferase subunit SoxA</fullName>
        <ecNumber evidence="1">2.8.5.2</ecNumber>
    </recommendedName>
    <alternativeName>
        <fullName evidence="7 8">Cytochrome c551 subunit monoheme</fullName>
    </alternativeName>
    <alternativeName>
        <fullName evidence="7">Protein SoxA</fullName>
    </alternativeName>
    <alternativeName>
        <fullName evidence="10">SoxAX cytochrome complex subunit A</fullName>
    </alternativeName>
    <alternativeName>
        <fullName evidence="7">Sulfur oxidizing protein A</fullName>
    </alternativeName>
    <alternativeName>
        <fullName evidence="1">Thiosulfate-oxidizing multienzyme system protein SoxA</fullName>
        <shortName evidence="1">TOMES protein SoxA</shortName>
    </alternativeName>
</protein>
<comment type="function">
    <text evidence="3 5 6">C-type monoheme cytochrome, which is part of the SoxAX cytochrome complex involved in sulfur oxidation. The SoxAX complex catalyzes the formation of a heterodisulfide bond between the conserved cysteine residue on a sulfur carrier SoxYZ complex subunit SoxY and thiosulfate or other inorganic sulfur substrates. This leads to the liberation of two electrons, which may be transferred from the SoxAX complex to another cytochrome c and which then may be used for reductive CO(2) fixation.</text>
</comment>
<comment type="catalytic activity">
    <reaction evidence="1">
        <text>L-cysteinyl-[SoxY protein] + thiosulfate + 2 Fe(III)-[cytochrome c] = S-sulfosulfanyl-L-cysteinyl-[SoxY protein] + 2 Fe(II)-[cytochrome c] + 2 H(+)</text>
        <dbReference type="Rhea" id="RHEA:56720"/>
        <dbReference type="Rhea" id="RHEA-COMP:10350"/>
        <dbReference type="Rhea" id="RHEA-COMP:14328"/>
        <dbReference type="Rhea" id="RHEA-COMP:14399"/>
        <dbReference type="Rhea" id="RHEA-COMP:14691"/>
        <dbReference type="ChEBI" id="CHEBI:15378"/>
        <dbReference type="ChEBI" id="CHEBI:29033"/>
        <dbReference type="ChEBI" id="CHEBI:29034"/>
        <dbReference type="ChEBI" id="CHEBI:29950"/>
        <dbReference type="ChEBI" id="CHEBI:33542"/>
        <dbReference type="ChEBI" id="CHEBI:139321"/>
        <dbReference type="EC" id="2.8.5.2"/>
    </reaction>
</comment>
<comment type="catalytic activity">
    <reaction evidence="1">
        <text>S-sulfanyl-L-cysteinyl-[SoxY protein] + thiosulfate + 2 Fe(III)-[cytochrome c] = S-(2-sulfodisulfanyl)-L-cysteinyl-[SoxY protein] + 2 Fe(II)-[cytochrome c] + 2 H(+)</text>
        <dbReference type="Rhea" id="RHEA:51224"/>
        <dbReference type="Rhea" id="RHEA-COMP:10350"/>
        <dbReference type="Rhea" id="RHEA-COMP:14399"/>
        <dbReference type="Rhea" id="RHEA-COMP:14689"/>
        <dbReference type="Rhea" id="RHEA-COMP:14690"/>
        <dbReference type="ChEBI" id="CHEBI:15378"/>
        <dbReference type="ChEBI" id="CHEBI:29033"/>
        <dbReference type="ChEBI" id="CHEBI:29034"/>
        <dbReference type="ChEBI" id="CHEBI:33542"/>
        <dbReference type="ChEBI" id="CHEBI:61963"/>
        <dbReference type="ChEBI" id="CHEBI:140664"/>
        <dbReference type="EC" id="2.8.5.2"/>
    </reaction>
</comment>
<comment type="cofactor">
    <cofactor evidence="1 5 6">
        <name>heme</name>
        <dbReference type="ChEBI" id="CHEBI:30413"/>
    </cofactor>
    <text evidence="1 5 6">Binds 1 heme group per subunit.</text>
</comment>
<comment type="subunit">
    <text evidence="1 2">Heterodimer of SoxA and SoxX. The SoxAX complex interacts with CT1020, SoxAX-binding protein SaxB (SoxK); this interaction stimulates catalytic activity of the complex (By similarity).</text>
</comment>
<comment type="subcellular location">
    <subcellularLocation>
        <location evidence="5">Periplasm</location>
    </subcellularLocation>
</comment>
<comment type="induction">
    <text evidence="5">By thiosulfate.</text>
</comment>
<comment type="PTM">
    <text evidence="1 6">Cysteine persulfide at Cys-247.</text>
</comment>
<comment type="mass spectrometry">
    <text>The measured mass is that of mature SoxA with a heme bound, a cysteic acid residue at position 247 and a disulfide bridge.</text>
</comment>
<comment type="similarity">
    <text evidence="4">Belongs to the SoxA family.</text>
</comment>
<dbReference type="EC" id="2.8.5.2" evidence="1"/>
<dbReference type="EMBL" id="AY074395">
    <property type="protein sequence ID" value="AAL68886.1"/>
    <property type="molecule type" value="Genomic_DNA"/>
</dbReference>
<dbReference type="RefSeq" id="WP_139457806.1">
    <property type="nucleotide sequence ID" value="NZ_VDCH01000037.1"/>
</dbReference>
<dbReference type="SMR" id="Q8RLX0"/>
<dbReference type="OrthoDB" id="9808312at2"/>
<dbReference type="GO" id="GO:0070069">
    <property type="term" value="C:cytochrome complex"/>
    <property type="evidence" value="ECO:0007669"/>
    <property type="project" value="InterPro"/>
</dbReference>
<dbReference type="GO" id="GO:0042597">
    <property type="term" value="C:periplasmic space"/>
    <property type="evidence" value="ECO:0000314"/>
    <property type="project" value="UniProtKB"/>
</dbReference>
<dbReference type="GO" id="GO:0009055">
    <property type="term" value="F:electron transfer activity"/>
    <property type="evidence" value="ECO:0000314"/>
    <property type="project" value="UniProtKB"/>
</dbReference>
<dbReference type="GO" id="GO:0020037">
    <property type="term" value="F:heme binding"/>
    <property type="evidence" value="ECO:0000314"/>
    <property type="project" value="UniProtKB"/>
</dbReference>
<dbReference type="GO" id="GO:0005506">
    <property type="term" value="F:iron ion binding"/>
    <property type="evidence" value="ECO:0000314"/>
    <property type="project" value="UniProtKB"/>
</dbReference>
<dbReference type="GO" id="GO:0016491">
    <property type="term" value="F:oxidoreductase activity"/>
    <property type="evidence" value="ECO:0000314"/>
    <property type="project" value="UniProtKB"/>
</dbReference>
<dbReference type="GO" id="GO:0016669">
    <property type="term" value="F:oxidoreductase activity, acting on a sulfur group of donors, cytochrome as acceptor"/>
    <property type="evidence" value="ECO:0000314"/>
    <property type="project" value="UniProtKB"/>
</dbReference>
<dbReference type="GO" id="GO:0004792">
    <property type="term" value="F:thiosulfate-cyanide sulfurtransferase activity"/>
    <property type="evidence" value="ECO:0000314"/>
    <property type="project" value="UniProtKB"/>
</dbReference>
<dbReference type="GO" id="GO:0019417">
    <property type="term" value="P:sulfur oxidation"/>
    <property type="evidence" value="ECO:0000314"/>
    <property type="project" value="UniProtKB"/>
</dbReference>
<dbReference type="Gene3D" id="1.10.760.10">
    <property type="entry name" value="Cytochrome c-like domain"/>
    <property type="match status" value="2"/>
</dbReference>
<dbReference type="InterPro" id="IPR009056">
    <property type="entry name" value="Cyt_c-like_dom"/>
</dbReference>
<dbReference type="InterPro" id="IPR036909">
    <property type="entry name" value="Cyt_c-like_dom_sf"/>
</dbReference>
<dbReference type="InterPro" id="IPR025710">
    <property type="entry name" value="SoxA"/>
</dbReference>
<dbReference type="NCBIfam" id="TIGR04484">
    <property type="entry name" value="thiosulf_SoxA"/>
    <property type="match status" value="1"/>
</dbReference>
<dbReference type="Pfam" id="PF21342">
    <property type="entry name" value="SoxA-TsdA_cyt-c"/>
    <property type="match status" value="2"/>
</dbReference>
<dbReference type="PIRSF" id="PIRSF038455">
    <property type="entry name" value="SoxA"/>
    <property type="match status" value="1"/>
</dbReference>
<dbReference type="SUPFAM" id="SSF46626">
    <property type="entry name" value="Cytochrome c"/>
    <property type="match status" value="2"/>
</dbReference>
<reference evidence="9 10" key="1">
    <citation type="journal article" date="2002" name="Biochemistry">
        <title>Identification of a thiosulfate utilization gene cluster from the green phototrophic bacterium Chlorobium limicola.</title>
        <authorList>
            <person name="Verte F."/>
            <person name="Kostanjevecki V."/>
            <person name="De Smet L."/>
            <person name="Meyer T.E."/>
            <person name="Cusanovich M.A."/>
            <person name="Van Beeumen J.J."/>
        </authorList>
    </citation>
    <scope>NUCLEOTIDE SEQUENCE [GENOMIC DNA]</scope>
    <scope>FUNCTION</scope>
    <scope>COFACTOR</scope>
    <scope>SUBCELLULAR LOCATION</scope>
    <scope>INDUCTION BY THIOSULFATE</scope>
    <source>
        <strain evidence="5">DSM 249 / 6230 / Tassajara</strain>
    </source>
</reference>
<reference evidence="9" key="2">
    <citation type="journal article" date="1998" name="Biochemistry">
        <title>The primary structure of soluble cytochrome c-551 from the phototrophic green sulfur bacterium Chlorobium limicola, strain Tassajara, reveals a novel c-type cytochrome.</title>
        <authorList>
            <person name="Klarskov K."/>
            <person name="Verte F."/>
            <person name="Van Driessche G."/>
            <person name="Meyer T.E."/>
            <person name="Cusanovich M.A."/>
            <person name="Van Beeumen J."/>
        </authorList>
    </citation>
    <scope>PROTEIN SEQUENCE OF 29-286</scope>
    <scope>FUNCTION</scope>
    <scope>COFACTOR</scope>
    <scope>CYSTEINE PERSULFIDE AT CYS-247</scope>
    <scope>MASS SPECTROMETRY</scope>
    <scope>SIGNAL</scope>
    <scope>DISULFIDE BOND</scope>
    <source>
        <strain evidence="9">NCIB 8346</strain>
    </source>
</reference>
<gene>
    <name evidence="10" type="primary">soxA</name>
</gene>
<sequence>MKKTIQRGLFTGALVLLTAMTSKPAHAAVNYQALVDADVKKFQGYFLKEFPGVKLEDFGDGVYALDEDSRKQWKEMEEFPPYELDVEAGKALFNKPFANGKSLGSCFSNGGAVRGMYPYFDEKRKEVITLEMAINECRVANGEKPYAPKKGDIARVSAYIASISRGQKIDVKVKSKAAYDAYMKGKEMFYAKRGQLNMSCSGCHMEYSGRHLRAEIISPALGHTTHFPVFRSKWGEIGTLHRRYAGCNENIGAKPFPAQSKEYRDLEFFQTVMSNGLKFNGPASRK</sequence>
<feature type="signal peptide" evidence="6">
    <location>
        <begin position="1"/>
        <end position="28"/>
    </location>
</feature>
<feature type="chain" id="PRO_0000423490" description="L-cysteine S-thiosulfotransferase subunit SoxA">
    <location>
        <begin position="29"/>
        <end position="286"/>
    </location>
</feature>
<feature type="domain" description="Cytochrome c" evidence="4 9">
    <location>
        <begin position="180"/>
        <end position="286"/>
    </location>
</feature>
<feature type="active site" description="Cysteine persulfide intermediate">
    <location>
        <position position="247"/>
    </location>
</feature>
<feature type="binding site" description="covalent" evidence="1">
    <location>
        <position position="200"/>
    </location>
    <ligand>
        <name>heme</name>
        <dbReference type="ChEBI" id="CHEBI:30413"/>
    </ligand>
</feature>
<feature type="binding site" description="axial binding residue" evidence="1">
    <location>
        <position position="204"/>
    </location>
    <ligand>
        <name>heme</name>
        <dbReference type="ChEBI" id="CHEBI:30413"/>
    </ligand>
    <ligandPart>
        <name>Fe</name>
        <dbReference type="ChEBI" id="CHEBI:18248"/>
    </ligandPart>
</feature>
<feature type="binding site" evidence="3">
    <location>
        <position position="243"/>
    </location>
    <ligand>
        <name>substrate</name>
    </ligand>
</feature>
<feature type="binding site" description="axial binding residue" evidence="1">
    <location>
        <position position="247"/>
    </location>
    <ligand>
        <name>heme</name>
        <dbReference type="ChEBI" id="CHEBI:30413"/>
    </ligand>
    <ligandPart>
        <name>Fe</name>
        <dbReference type="ChEBI" id="CHEBI:18248"/>
    </ligandPart>
</feature>
<feature type="disulfide bond" evidence="6">
    <location>
        <begin position="106"/>
        <end position="137"/>
    </location>
</feature>
<feature type="sequence variant" description="In strain: NCIB 8346." evidence="6">
    <original>VN</original>
    <variation>TD</variation>
    <location>
        <begin position="29"/>
        <end position="30"/>
    </location>
</feature>
<feature type="sequence variant" description="In strain: NCIB 8346." evidence="6">
    <original>A</original>
    <variation>K</variation>
    <location>
        <position position="33"/>
    </location>
</feature>
<feature type="sequence variant" description="In strain: NCIB 8346." evidence="6">
    <original>VKK</original>
    <variation>TQA</variation>
    <location>
        <begin position="39"/>
        <end position="41"/>
    </location>
</feature>
<feature type="sequence variant" description="In strain: NCIB 8346." evidence="6">
    <original>G</original>
    <variation>S</variation>
    <location>
        <position position="44"/>
    </location>
</feature>
<feature type="sequence variant" description="In strain: NCIB 8346." evidence="6">
    <original>L</original>
    <variation>Q</variation>
    <location>
        <position position="47"/>
    </location>
</feature>
<feature type="sequence variant" description="In strain: NCIB 8346." evidence="6">
    <original>G</original>
    <variation>E</variation>
    <location>
        <position position="52"/>
    </location>
</feature>
<feature type="sequence variant" description="In strain: NCIB 8346." evidence="6">
    <original>E</original>
    <variation>A</variation>
    <location>
        <position position="56"/>
    </location>
</feature>
<feature type="sequence variant" description="In strain: NCIB 8346." evidence="6">
    <original>GD</original>
    <variation>AN</variation>
    <location>
        <begin position="59"/>
        <end position="60"/>
    </location>
</feature>
<feature type="sequence variant" description="In strain: NCIB 8346." evidence="6">
    <original>S</original>
    <variation>A</variation>
    <location>
        <position position="69"/>
    </location>
</feature>
<feature type="sequence variant" description="In strain: NCIB 8346." evidence="6">
    <original>K</original>
    <variation>T</variation>
    <location>
        <position position="71"/>
    </location>
</feature>
<feature type="sequence variant" description="In strain: NCIB 8346." evidence="6">
    <original>K</original>
    <variation>Q</variation>
    <location>
        <position position="74"/>
    </location>
</feature>
<feature type="sequence variant" description="In strain: NCIB 8346." evidence="6">
    <original>G</original>
    <variation>A</variation>
    <location>
        <position position="104"/>
    </location>
</feature>
<feature type="sequence variant" description="In strain: NCIB 8346." evidence="6">
    <original>SN</original>
    <variation>PD</variation>
    <location>
        <begin position="108"/>
        <end position="109"/>
    </location>
</feature>
<feature type="sequence variant" description="In strain: NCIB 8346." evidence="6">
    <original>M</original>
    <variation>Q</variation>
    <location>
        <position position="116"/>
    </location>
</feature>
<feature type="sequence variant" description="In strain: NCIB 8346." evidence="6">
    <original>K</original>
    <variation>G</variation>
    <location>
        <position position="125"/>
    </location>
</feature>
<feature type="sequence variant" description="In strain: NCIB 8346." evidence="6">
    <original>I</original>
    <variation>V</variation>
    <location>
        <position position="128"/>
    </location>
</feature>
<feature type="sequence variant" description="In strain: NCIB 8346." evidence="6">
    <original>A</original>
    <variation>K</variation>
    <location>
        <position position="140"/>
    </location>
</feature>
<feature type="sequence variant" description="In strain: NCIB 8346." evidence="6">
    <original>PYAPK</original>
    <variation>AWPWQ</variation>
    <location>
        <begin position="145"/>
        <end position="149"/>
    </location>
</feature>
<feature type="sequence variant" description="In strain: NCIB 8346." evidence="6">
    <original>I</original>
    <variation>L</variation>
    <location>
        <position position="153"/>
    </location>
</feature>
<feature type="sequence variant" description="In strain: NCIB 8346." evidence="6">
    <original>R</original>
    <variation>K</variation>
    <location>
        <position position="155"/>
    </location>
</feature>
<feature type="sequence variant" description="In strain: NCIB 8346." evidence="6">
    <original>I</original>
    <variation>M</variation>
    <location>
        <position position="160"/>
    </location>
</feature>
<feature type="sequence variant" description="In strain: NCIB 8346." evidence="6">
    <original>S</original>
    <variation>Y</variation>
    <location>
        <position position="162"/>
    </location>
</feature>
<feature type="sequence variant" description="In strain: NCIB 8346." evidence="6">
    <original>I</original>
    <variation>V</variation>
    <location>
        <position position="169"/>
    </location>
</feature>
<feature type="sequence variant" description="In strain: NCIB 8346." evidence="6">
    <original>EM</original>
    <variation>KF</variation>
    <location>
        <begin position="187"/>
        <end position="188"/>
    </location>
</feature>
<feature type="sequence variant" description="In strain: NCIB 8346." evidence="6">
    <original>S</original>
    <variation>A</variation>
    <location>
        <position position="208"/>
    </location>
</feature>
<feature type="sequence variant" description="In strain: NCIB 8346." evidence="6">
    <original>I</original>
    <variation>V</variation>
    <location>
        <position position="217"/>
    </location>
</feature>
<feature type="sequence variant" description="In strain: NCIB 8346." evidence="6">
    <original>H</original>
    <variation>Q</variation>
    <location>
        <position position="223"/>
    </location>
</feature>
<feature type="sequence variant" description="In strain: NCIB 8346." evidence="6">
    <original>E</original>
    <variation>K</variation>
    <location>
        <position position="249"/>
    </location>
</feature>
<feature type="sequence variant" description="In strain: NCIB 8346." evidence="6">
    <original>K</original>
    <variation>E</variation>
    <location>
        <position position="261"/>
    </location>
</feature>
<feature type="sequence variant" description="In strain: NCIB 8346." evidence="6">
    <original>V</original>
    <variation>A</variation>
    <location>
        <position position="272"/>
    </location>
</feature>
<feature type="sequence variant" description="In strain: NCIB 8346." evidence="6">
    <original>KF</original>
    <variation>EY</variation>
    <location>
        <begin position="278"/>
        <end position="279"/>
    </location>
</feature>
<keyword id="KW-0903">Direct protein sequencing</keyword>
<keyword id="KW-1015">Disulfide bond</keyword>
<keyword id="KW-0249">Electron transport</keyword>
<keyword id="KW-0349">Heme</keyword>
<keyword id="KW-0408">Iron</keyword>
<keyword id="KW-0479">Metal-binding</keyword>
<keyword id="KW-0574">Periplasm</keyword>
<keyword id="KW-0732">Signal</keyword>
<keyword id="KW-0808">Transferase</keyword>
<keyword id="KW-0813">Transport</keyword>
<evidence type="ECO:0000250" key="1">
    <source>
        <dbReference type="UniProtKB" id="D7A6E5"/>
    </source>
</evidence>
<evidence type="ECO:0000250" key="2">
    <source>
        <dbReference type="UniProtKB" id="Q8KDM7"/>
    </source>
</evidence>
<evidence type="ECO:0000250" key="3">
    <source>
        <dbReference type="UniProtKB" id="Q939U1"/>
    </source>
</evidence>
<evidence type="ECO:0000255" key="4"/>
<evidence type="ECO:0000269" key="5">
    <source>
    </source>
</evidence>
<evidence type="ECO:0000269" key="6">
    <source>
    </source>
</evidence>
<evidence type="ECO:0000303" key="7">
    <source>
    </source>
</evidence>
<evidence type="ECO:0000303" key="8">
    <source>
    </source>
</evidence>
<evidence type="ECO:0000305" key="9"/>
<evidence type="ECO:0000312" key="10">
    <source>
        <dbReference type="EMBL" id="AAL68886.1"/>
    </source>
</evidence>
<accession>Q8RLX0</accession>